<sequence length="111" mass="13333">MSMKTLPKERRFETFSYLPPLSDRQIAAQIEYMIEQGFHPLIEFNEHSNPEEFYWTMWKLPLFDCKSPQQVLDEVRECRSEYGDCYIRVAGFDNIKQCQTVSFIVHRPGRY</sequence>
<accession>Q31NB2</accession>
<comment type="function">
    <text evidence="1 5 9">RuBisCO catalyzes two reactions: the carboxylation of D-ribulose 1,5-bisphosphate, the primary event in carbon dioxide fixation, as well as the oxidative fragmentation of the pentose substrate in the photorespiration process. Both reactions occur simultaneously and in competition at the same active site.</text>
</comment>
<comment type="function">
    <text evidence="4 9">Beta-carboxysome assembly initiates when soluble RuBisCO aggregates is condensed into a liquid matrix in a pre-carboxysome by the RbcS-like domains of probably both CcmM58 and CcmM35. CcmN interacts with the N-terminus of CcmM58, and then recruits the CcmK2 major shell protein via CcmN's encapsulation peptide. Shell formation requires CcmK proteins and CcmO. CcmL caps the otherwise elongated carboxysome. Once fully encapsulated carboxysomes are formed, they migrate within the cell probably via interactions with the cytoskeleton.</text>
</comment>
<comment type="subunit">
    <text evidence="2 9 14 15">Heterohexadecamer of 8 large and 8 small subunits (Probable). The CcmM short form purifies from carboxysomes in complex with both RuBisCO subunits; a second complex with full-length CcmM and RuBisCO also includes carbonic anhydrase (CA, ccaA). RuBisCO-CcmM complexes are probably associated with the carboxysome shell (PubMed:17675289). Isolated reduced and oxidized SSUL1 binds holo-RuBisCO (RbcL(8)-RbcS(8)) but not either subunit octamer alone; RuBisCO has a higher affinity for reduced SSUL1 (PubMed:30675061).</text>
</comment>
<comment type="subcellular location">
    <subcellularLocation>
        <location evidence="1 2 3 5 7 10 11 13">Carboxysome</location>
    </subcellularLocation>
    <text evidence="3 7">In the carboxysome RuBisCO is organized into a paracrystalline array (PubMed:28616951). This cyanobacterium makes beta-type carboxysomes (PubMed:22928045).</text>
</comment>
<comment type="induction">
    <text evidence="10">Carboxysome size and components vary with growth conditions. When grown in ambient air at medium light (50 uE meter(-2) second(-1)) there are 853 RuBisCO complexes (RbcL8S8) per carboxysome, the numbers decrease under low light and high CO(2), and increase under high light (at protein level).</text>
</comment>
<comment type="biotechnology">
    <text evidence="8">Heterologous expression of 12 carboxysomal genes in E.coli (ccaA, ccmK2, ccmK3, ccmK4, ccmL, ccmM, ccmN, ccmO, ccmP, rbcL, rbcS, rbcX) leads to the formation of bodies that resemble carboxysomes, have densely packed paracrystalline arrays and RuBisCO activity. These structures open the door to generating carboxysomes in plant cells to increase their photosynthesis and productivity, as well as tailoring bacterial microcompartments to specific metabolic needs and molecule delivery.</text>
</comment>
<comment type="miscellaneous">
    <text evidence="6 16">RuBisCO folding and assembly commences when the nascent large subunit folds with the help of chaperonin GroEL-GroES. Both RbcX and Raf1 help folded RbcL release from the chaperonin and dimerize; dimeric Raf1 binds to RbcL(2) leading to an RbcL8-Raf1(8) complex. RbcS displaces Raf1, resulting in holoenzyme formation.</text>
</comment>
<comment type="miscellaneous">
    <text evidence="1">The basic functional RuBisCO is composed of a large chain homodimer in a 'head-to-tail' conformation. In form I RuBisCO this homodimer is arranged in a barrel-like tetramer with the small subunits forming a tetrameric 'cap' on each end of the 'barrel'.</text>
</comment>
<comment type="similarity">
    <text evidence="1">Belongs to the RuBisCO small chain family.</text>
</comment>
<protein>
    <recommendedName>
        <fullName evidence="1">Ribulose bisphosphate carboxylase small subunit</fullName>
        <shortName evidence="1">RuBisCO small subunit</shortName>
    </recommendedName>
</protein>
<name>RBS_SYNE7</name>
<feature type="chain" id="PRO_0000451248" description="Ribulose bisphosphate carboxylase small subunit">
    <location>
        <begin position="1"/>
        <end position="111"/>
    </location>
</feature>
<feature type="turn" evidence="19">
    <location>
        <begin position="13"/>
        <end position="17"/>
    </location>
</feature>
<feature type="helix" evidence="19">
    <location>
        <begin position="23"/>
        <end position="36"/>
    </location>
</feature>
<feature type="strand" evidence="19">
    <location>
        <begin position="41"/>
        <end position="46"/>
    </location>
</feature>
<feature type="strand" evidence="18">
    <location>
        <begin position="56"/>
        <end position="59"/>
    </location>
</feature>
<feature type="helix" evidence="19">
    <location>
        <begin position="68"/>
        <end position="81"/>
    </location>
</feature>
<feature type="strand" evidence="19">
    <location>
        <begin position="85"/>
        <end position="93"/>
    </location>
</feature>
<feature type="turn" evidence="19">
    <location>
        <begin position="94"/>
        <end position="97"/>
    </location>
</feature>
<feature type="strand" evidence="19">
    <location>
        <begin position="98"/>
        <end position="106"/>
    </location>
</feature>
<keyword id="KW-0002">3D-structure</keyword>
<keyword id="KW-1283">Bacterial microcompartment</keyword>
<keyword id="KW-0113">Calvin cycle</keyword>
<keyword id="KW-0120">Carbon dioxide fixation</keyword>
<keyword id="KW-1282">Carboxysome</keyword>
<keyword id="KW-0601">Photorespiration</keyword>
<keyword id="KW-0602">Photosynthesis</keyword>
<keyword id="KW-1185">Reference proteome</keyword>
<dbReference type="EMBL" id="CP000100">
    <property type="protein sequence ID" value="ABB57457.1"/>
    <property type="molecule type" value="Genomic_DNA"/>
</dbReference>
<dbReference type="PDB" id="6HBC">
    <property type="method" value="EM"/>
    <property type="resolution" value="2.78 A"/>
    <property type="chains" value="D/E=1-111"/>
</dbReference>
<dbReference type="PDB" id="8BCM">
    <property type="method" value="EM"/>
    <property type="resolution" value="2.15 A"/>
    <property type="chains" value="D/E/K/L/M/N/O/P=1-111"/>
</dbReference>
<dbReference type="PDB" id="8WPZ">
    <property type="method" value="EM"/>
    <property type="resolution" value="3.90 A"/>
    <property type="chains" value="A/B/E/F/I/L/M/P=1-111"/>
</dbReference>
<dbReference type="PDBsum" id="6HBC"/>
<dbReference type="PDBsum" id="8BCM"/>
<dbReference type="PDBsum" id="8WPZ"/>
<dbReference type="EMDB" id="EMD-0180"/>
<dbReference type="EMDB" id="EMD-15966"/>
<dbReference type="EMDB" id="EMD-37727"/>
<dbReference type="SMR" id="Q31NB2"/>
<dbReference type="STRING" id="1140.Synpcc7942_1427"/>
<dbReference type="PaxDb" id="1140-Synpcc7942_1427"/>
<dbReference type="KEGG" id="syf:Synpcc7942_1427"/>
<dbReference type="eggNOG" id="COG4451">
    <property type="taxonomic scope" value="Bacteria"/>
</dbReference>
<dbReference type="HOGENOM" id="CLU_098114_2_0_3"/>
<dbReference type="BioCyc" id="SYNEL:SYNPCC7942_1427-MONOMER"/>
<dbReference type="SABIO-RK" id="Q31NB2"/>
<dbReference type="CD-CODE" id="04340D3C">
    <property type="entry name" value="Synthetic Condensate 000348"/>
</dbReference>
<dbReference type="Proteomes" id="UP000889800">
    <property type="component" value="Chromosome"/>
</dbReference>
<dbReference type="GO" id="GO:0031470">
    <property type="term" value="C:carboxysome"/>
    <property type="evidence" value="ECO:0000314"/>
    <property type="project" value="UniProtKB"/>
</dbReference>
<dbReference type="GO" id="GO:0016984">
    <property type="term" value="F:ribulose-bisphosphate carboxylase activity"/>
    <property type="evidence" value="ECO:0007669"/>
    <property type="project" value="UniProtKB-UniRule"/>
</dbReference>
<dbReference type="GO" id="GO:0009853">
    <property type="term" value="P:photorespiration"/>
    <property type="evidence" value="ECO:0007669"/>
    <property type="project" value="UniProtKB-KW"/>
</dbReference>
<dbReference type="GO" id="GO:0019253">
    <property type="term" value="P:reductive pentose-phosphate cycle"/>
    <property type="evidence" value="ECO:0007669"/>
    <property type="project" value="UniProtKB-UniRule"/>
</dbReference>
<dbReference type="CDD" id="cd03527">
    <property type="entry name" value="RuBisCO_small"/>
    <property type="match status" value="1"/>
</dbReference>
<dbReference type="Gene3D" id="3.30.190.10">
    <property type="entry name" value="Ribulose bisphosphate carboxylase, small subunit"/>
    <property type="match status" value="1"/>
</dbReference>
<dbReference type="HAMAP" id="MF_00859">
    <property type="entry name" value="RuBisCO_S_bact"/>
    <property type="match status" value="1"/>
</dbReference>
<dbReference type="InterPro" id="IPR024681">
    <property type="entry name" value="RuBisCO_ssu"/>
</dbReference>
<dbReference type="InterPro" id="IPR000894">
    <property type="entry name" value="RuBisCO_ssu_dom"/>
</dbReference>
<dbReference type="InterPro" id="IPR036385">
    <property type="entry name" value="RuBisCO_ssu_sf"/>
</dbReference>
<dbReference type="PANTHER" id="PTHR31262">
    <property type="entry name" value="RIBULOSE BISPHOSPHATE CARBOXYLASE SMALL CHAIN 1, CHLOROPLASTIC"/>
    <property type="match status" value="1"/>
</dbReference>
<dbReference type="Pfam" id="PF00101">
    <property type="entry name" value="RuBisCO_small"/>
    <property type="match status" value="1"/>
</dbReference>
<dbReference type="SMART" id="SM00961">
    <property type="entry name" value="RuBisCO_small"/>
    <property type="match status" value="1"/>
</dbReference>
<dbReference type="SUPFAM" id="SSF55239">
    <property type="entry name" value="RuBisCO, small subunit"/>
    <property type="match status" value="1"/>
</dbReference>
<gene>
    <name evidence="1" type="primary">cbbS</name>
    <name evidence="1 12" type="synonym">rbcS</name>
    <name type="ordered locus">Synpcc7942_1427</name>
</gene>
<reference key="1">
    <citation type="submission" date="2005-08" db="EMBL/GenBank/DDBJ databases">
        <title>Complete sequence of chromosome 1 of Synechococcus elongatus PCC 7942.</title>
        <authorList>
            <consortium name="US DOE Joint Genome Institute"/>
            <person name="Copeland A."/>
            <person name="Lucas S."/>
            <person name="Lapidus A."/>
            <person name="Barry K."/>
            <person name="Detter J.C."/>
            <person name="Glavina T."/>
            <person name="Hammon N."/>
            <person name="Israni S."/>
            <person name="Pitluck S."/>
            <person name="Schmutz J."/>
            <person name="Larimer F."/>
            <person name="Land M."/>
            <person name="Kyrpides N."/>
            <person name="Lykidis A."/>
            <person name="Golden S."/>
            <person name="Richardson P."/>
        </authorList>
    </citation>
    <scope>NUCLEOTIDE SEQUENCE [LARGE SCALE GENOMIC DNA]</scope>
    <source>
        <strain>ATCC 33912 / PCC 7942 / FACHB-805</strain>
    </source>
</reference>
<reference key="2">
    <citation type="journal article" date="2007" name="J. Biol. Chem.">
        <title>Analysis of carboxysomes from Synechococcus PCC7942 reveals multiple Rubisco complexes with carboxysomal proteins CcmM and CcaA.</title>
        <authorList>
            <person name="Long B.M."/>
            <person name="Badger M.R."/>
            <person name="Whitney S.M."/>
            <person name="Price G.D."/>
        </authorList>
    </citation>
    <scope>IDENTIFICATION BY MASS SPECTROMETRY</scope>
    <scope>INTERACTION WITH CCMM</scope>
    <scope>SUBCELLULAR LOCATION</scope>
    <source>
        <strain>ATCC 33912 / PCC 7942 / FACHB-805</strain>
    </source>
</reference>
<reference key="3">
    <citation type="journal article" date="2012" name="PLoS ONE">
        <title>Structural determinants of the outer shell of beta-carboxysomes in Synechococcus elongatus PCC 7942: roles for CcmK2, K3-K4, CcmO, and CcmL.</title>
        <authorList>
            <person name="Rae B.D."/>
            <person name="Long B.M."/>
            <person name="Badger M.R."/>
            <person name="Price G.D."/>
        </authorList>
    </citation>
    <scope>SUBCELLULAR LOCATION</scope>
    <source>
        <strain>ATCC 33912 / PCC 7942 / FACHB-805</strain>
    </source>
</reference>
<reference key="4">
    <citation type="journal article" date="2013" name="Cell">
        <title>Biogenesis of a bacterial organelle: the carboxysome assembly pathway.</title>
        <authorList>
            <person name="Cameron J.C."/>
            <person name="Wilson S.C."/>
            <person name="Bernstein S.L."/>
            <person name="Kerfeld C.A."/>
        </authorList>
    </citation>
    <scope>CARBOXYSOME ASSEMBLY PROCESS</scope>
    <scope>SUBCELLULAR LOCATION</scope>
    <source>
        <strain>ATCC 33912 / PCC 7942 / FACHB-805</strain>
    </source>
</reference>
<reference key="5">
    <citation type="journal article" date="2014" name="Photosyn. Res.">
        <title>In vitro and in vivo analyses of the role of the carboxysomal beta-type carbonic anhydrase of the cyanobacterium Synechococcus elongatus in carboxylation of ribulose-1,5-bisphosphate.</title>
        <authorList>
            <person name="Nishimura T."/>
            <person name="Yamaguchi O."/>
            <person name="Takatani N."/>
            <person name="Maeda S."/>
            <person name="Omata T."/>
        </authorList>
    </citation>
    <scope>FUNCTION</scope>
    <scope>CATALYTIC ACTIVITY</scope>
    <scope>SUBCELLULAR LOCATION</scope>
    <source>
        <strain>ATCC 33912 / PCC 7942 / FACHB-805</strain>
    </source>
</reference>
<reference key="6">
    <citation type="journal article" date="2015" name="Nat. Struct. Mol. Biol.">
        <title>Structure and mechanism of the Rubisco-assembly chaperone Raf1.</title>
        <authorList>
            <person name="Hauser T."/>
            <person name="Bhat J.Y."/>
            <person name="Milicic G."/>
            <person name="Wendler P."/>
            <person name="Hartl F.U."/>
            <person name="Bracher A."/>
            <person name="Hayer-Hartl M."/>
        </authorList>
    </citation>
    <scope>RUBISCO FOLDING AND ASSEMBLY</scope>
    <scope>SUBUNIT</scope>
    <scope>SUBCELLULAR LOCATION</scope>
    <source>
        <strain>ATCC 33912 / PCC 7942 / FACHB-805</strain>
    </source>
</reference>
<reference key="7">
    <citation type="journal article" date="2017" name="Nanoscale">
        <title>Direct characterization of the native structure and mechanics of cyanobacterial carboxysomes.</title>
        <authorList>
            <person name="Faulkner M."/>
            <person name="Rodriguez-Ramos J."/>
            <person name="Dykes G.F."/>
            <person name="Owen S.V."/>
            <person name="Casella S."/>
            <person name="Simpson D.M."/>
            <person name="Beynon R.J."/>
            <person name="Liu L.N."/>
        </authorList>
    </citation>
    <scope>SUBCELLULAR LOCATION</scope>
    <source>
        <strain>ATCC 33912 / PCC 7942 / FACHB-805</strain>
    </source>
</reference>
<reference key="8">
    <citation type="journal article" date="2018" name="Front. Plant Sci.">
        <title>Engineering and Modulating Functional Cyanobacterial CO2-Fixing Organelles.</title>
        <authorList>
            <person name="Fang Y."/>
            <person name="Huang F."/>
            <person name="Faulkner M."/>
            <person name="Jiang Q."/>
            <person name="Dykes G.F."/>
            <person name="Yang M."/>
            <person name="Liu L.N."/>
        </authorList>
    </citation>
    <scope>BIOTECHNOLOGY</scope>
    <source>
        <strain>ATCC 33912 / PCC 7942 / FACHB-805</strain>
    </source>
</reference>
<reference key="9">
    <citation type="journal article" date="2019" name="Plant Cell">
        <title>Single-Organelle Quantification Reveals Stoichiometric and Structural Variability of Carboxysomes Dependent on the Environment.</title>
        <authorList>
            <person name="Sun Y."/>
            <person name="Wollman A.J.M."/>
            <person name="Huang F."/>
            <person name="Leake M.C."/>
            <person name="Liu L.N."/>
        </authorList>
    </citation>
    <scope>SUBCELLULAR LOCATION</scope>
    <scope>INDUCTION</scope>
    <source>
        <strain>ATCC 33912 / PCC 7942 / FACHB-805</strain>
    </source>
</reference>
<reference key="10">
    <citation type="journal article" date="2020" name="Proc. Natl. Acad. Sci. U.S.A.">
        <title>Rubisco accumulation factor 1 (Raf1) plays essential roles in mediating Rubisco assembly and carboxysome biogenesis.</title>
        <authorList>
            <person name="Huang F."/>
            <person name="Kong W.W."/>
            <person name="Sun Y."/>
            <person name="Chen T."/>
            <person name="Dykes G.F."/>
            <person name="Jiang Y.L."/>
            <person name="Liu L.N."/>
        </authorList>
    </citation>
    <scope>CARBOXYSOME ASSEMBLY PROCESS</scope>
    <scope>SUBCELLULAR LOCATION</scope>
    <source>
        <strain>ATCC 33912 / PCC 7942 / FACHB-805</strain>
    </source>
</reference>
<reference evidence="17" key="11">
    <citation type="journal article" date="2019" name="Nature">
        <title>Rubisco condensate formation by CcmM in beta-carboxysome biogenesis.</title>
        <authorList>
            <person name="Wang H."/>
            <person name="Yan X."/>
            <person name="Aigner H."/>
            <person name="Bracher A."/>
            <person name="Nguyen N.D."/>
            <person name="Hee W.Y."/>
            <person name="Long B.M."/>
            <person name="Price G.D."/>
            <person name="Hartl F.U."/>
            <person name="Hayer-Hartl M."/>
        </authorList>
    </citation>
    <scope>STRUCTURE BY ELECTRON MICROSCOPY (2.78 ANGSTROMS) IN COMPLEX WITH LARGE SUBUNIT AND CCMM35</scope>
    <scope>FUNCTION</scope>
    <scope>CATALYTIC ACTIVITY</scope>
    <scope>SUBUNIT</scope>
    <source>
        <strain>ATCC 33912 / PCC 7942 / FACHB-805</strain>
    </source>
</reference>
<organism>
    <name type="scientific">Synechococcus elongatus (strain ATCC 33912 / PCC 7942 / FACHB-805)</name>
    <name type="common">Anacystis nidulans R2</name>
    <dbReference type="NCBI Taxonomy" id="1140"/>
    <lineage>
        <taxon>Bacteria</taxon>
        <taxon>Bacillati</taxon>
        <taxon>Cyanobacteriota</taxon>
        <taxon>Cyanophyceae</taxon>
        <taxon>Synechococcales</taxon>
        <taxon>Synechococcaceae</taxon>
        <taxon>Synechococcus</taxon>
    </lineage>
</organism>
<proteinExistence type="evidence at protein level"/>
<evidence type="ECO:0000255" key="1">
    <source>
        <dbReference type="HAMAP-Rule" id="MF_00859"/>
    </source>
</evidence>
<evidence type="ECO:0000269" key="2">
    <source>
    </source>
</evidence>
<evidence type="ECO:0000269" key="3">
    <source>
    </source>
</evidence>
<evidence type="ECO:0000269" key="4">
    <source>
    </source>
</evidence>
<evidence type="ECO:0000269" key="5">
    <source>
    </source>
</evidence>
<evidence type="ECO:0000269" key="6">
    <source>
    </source>
</evidence>
<evidence type="ECO:0000269" key="7">
    <source>
    </source>
</evidence>
<evidence type="ECO:0000269" key="8">
    <source>
    </source>
</evidence>
<evidence type="ECO:0000269" key="9">
    <source>
    </source>
</evidence>
<evidence type="ECO:0000269" key="10">
    <source>
    </source>
</evidence>
<evidence type="ECO:0000269" key="11">
    <source>
    </source>
</evidence>
<evidence type="ECO:0000303" key="12">
    <source>
    </source>
</evidence>
<evidence type="ECO:0000305" key="13">
    <source>
    </source>
</evidence>
<evidence type="ECO:0000305" key="14">
    <source>
    </source>
</evidence>
<evidence type="ECO:0000305" key="15">
    <source>
    </source>
</evidence>
<evidence type="ECO:0000305" key="16">
    <source>
    </source>
</evidence>
<evidence type="ECO:0007744" key="17">
    <source>
        <dbReference type="PDB" id="6HBC"/>
    </source>
</evidence>
<evidence type="ECO:0007829" key="18">
    <source>
        <dbReference type="PDB" id="6HBC"/>
    </source>
</evidence>
<evidence type="ECO:0007829" key="19">
    <source>
        <dbReference type="PDB" id="8BCM"/>
    </source>
</evidence>